<gene>
    <name type="primary">maf</name>
    <name type="ordered locus">GWCH70_2551</name>
</gene>
<evidence type="ECO:0000255" key="1">
    <source>
        <dbReference type="HAMAP-Rule" id="MF_00528"/>
    </source>
</evidence>
<name>NTPPA_GEOSW</name>
<accession>C5D5H8</accession>
<keyword id="KW-0963">Cytoplasm</keyword>
<keyword id="KW-0378">Hydrolase</keyword>
<keyword id="KW-0546">Nucleotide metabolism</keyword>
<sequence>MKQLILASSSPRRKQLLELANLRFQILASHIDEQIHETKSPEQAVQLLAYRKAKAVADHYPHSYVIGADTVVVYQDNILGKPKTEEEAAAMLRMLSGNEHHVLTGVAILSPNGQSLFVEKTKVFFWDLTEEEIFDYIATGEPMDKAGAYGIQGRAALFVKRIEGDYFNVVGLPLSRTVREVKRLGW</sequence>
<proteinExistence type="inferred from homology"/>
<dbReference type="EC" id="3.6.1.9" evidence="1"/>
<dbReference type="EMBL" id="CP001638">
    <property type="protein sequence ID" value="ACS25246.1"/>
    <property type="molecule type" value="Genomic_DNA"/>
</dbReference>
<dbReference type="SMR" id="C5D5H8"/>
<dbReference type="STRING" id="471223.GWCH70_2551"/>
<dbReference type="KEGG" id="gwc:GWCH70_2551"/>
<dbReference type="eggNOG" id="COG0424">
    <property type="taxonomic scope" value="Bacteria"/>
</dbReference>
<dbReference type="HOGENOM" id="CLU_040416_0_0_9"/>
<dbReference type="OrthoDB" id="9807767at2"/>
<dbReference type="GO" id="GO:0005737">
    <property type="term" value="C:cytoplasm"/>
    <property type="evidence" value="ECO:0007669"/>
    <property type="project" value="UniProtKB-SubCell"/>
</dbReference>
<dbReference type="GO" id="GO:0036218">
    <property type="term" value="F:dTTP diphosphatase activity"/>
    <property type="evidence" value="ECO:0007669"/>
    <property type="project" value="RHEA"/>
</dbReference>
<dbReference type="GO" id="GO:0036221">
    <property type="term" value="F:UTP diphosphatase activity"/>
    <property type="evidence" value="ECO:0007669"/>
    <property type="project" value="RHEA"/>
</dbReference>
<dbReference type="GO" id="GO:0009117">
    <property type="term" value="P:nucleotide metabolic process"/>
    <property type="evidence" value="ECO:0007669"/>
    <property type="project" value="UniProtKB-KW"/>
</dbReference>
<dbReference type="CDD" id="cd00555">
    <property type="entry name" value="Maf"/>
    <property type="match status" value="1"/>
</dbReference>
<dbReference type="FunFam" id="3.90.950.10:FF:000005">
    <property type="entry name" value="7-methyl-GTP pyrophosphatase"/>
    <property type="match status" value="1"/>
</dbReference>
<dbReference type="Gene3D" id="3.90.950.10">
    <property type="match status" value="1"/>
</dbReference>
<dbReference type="HAMAP" id="MF_00528">
    <property type="entry name" value="Maf"/>
    <property type="match status" value="1"/>
</dbReference>
<dbReference type="InterPro" id="IPR029001">
    <property type="entry name" value="ITPase-like_fam"/>
</dbReference>
<dbReference type="InterPro" id="IPR003697">
    <property type="entry name" value="Maf-like"/>
</dbReference>
<dbReference type="NCBIfam" id="TIGR00172">
    <property type="entry name" value="maf"/>
    <property type="match status" value="1"/>
</dbReference>
<dbReference type="PANTHER" id="PTHR43213">
    <property type="entry name" value="BIFUNCTIONAL DTTP/UTP PYROPHOSPHATASE/METHYLTRANSFERASE PROTEIN-RELATED"/>
    <property type="match status" value="1"/>
</dbReference>
<dbReference type="PANTHER" id="PTHR43213:SF5">
    <property type="entry name" value="BIFUNCTIONAL DTTP_UTP PYROPHOSPHATASE_METHYLTRANSFERASE PROTEIN-RELATED"/>
    <property type="match status" value="1"/>
</dbReference>
<dbReference type="Pfam" id="PF02545">
    <property type="entry name" value="Maf"/>
    <property type="match status" value="1"/>
</dbReference>
<dbReference type="PIRSF" id="PIRSF006305">
    <property type="entry name" value="Maf"/>
    <property type="match status" value="1"/>
</dbReference>
<dbReference type="SUPFAM" id="SSF52972">
    <property type="entry name" value="ITPase-like"/>
    <property type="match status" value="1"/>
</dbReference>
<organism>
    <name type="scientific">Geobacillus sp. (strain WCH70)</name>
    <dbReference type="NCBI Taxonomy" id="471223"/>
    <lineage>
        <taxon>Bacteria</taxon>
        <taxon>Bacillati</taxon>
        <taxon>Bacillota</taxon>
        <taxon>Bacilli</taxon>
        <taxon>Bacillales</taxon>
        <taxon>Anoxybacillaceae</taxon>
        <taxon>Geobacillus</taxon>
    </lineage>
</organism>
<protein>
    <recommendedName>
        <fullName evidence="1">dTTP/UTP pyrophosphatase</fullName>
        <shortName evidence="1">dTTPase/UTPase</shortName>
        <ecNumber evidence="1">3.6.1.9</ecNumber>
    </recommendedName>
    <alternativeName>
        <fullName evidence="1">Nucleoside triphosphate pyrophosphatase</fullName>
    </alternativeName>
    <alternativeName>
        <fullName evidence="1">Nucleotide pyrophosphatase</fullName>
        <shortName evidence="1">Nucleotide PPase</shortName>
    </alternativeName>
</protein>
<comment type="function">
    <text evidence="1">Nucleoside triphosphate pyrophosphatase that hydrolyzes dTTP and UTP. May have a dual role in cell division arrest and in preventing the incorporation of modified nucleotides into cellular nucleic acids.</text>
</comment>
<comment type="catalytic activity">
    <reaction evidence="1">
        <text>dTTP + H2O = dTMP + diphosphate + H(+)</text>
        <dbReference type="Rhea" id="RHEA:28534"/>
        <dbReference type="ChEBI" id="CHEBI:15377"/>
        <dbReference type="ChEBI" id="CHEBI:15378"/>
        <dbReference type="ChEBI" id="CHEBI:33019"/>
        <dbReference type="ChEBI" id="CHEBI:37568"/>
        <dbReference type="ChEBI" id="CHEBI:63528"/>
        <dbReference type="EC" id="3.6.1.9"/>
    </reaction>
</comment>
<comment type="catalytic activity">
    <reaction evidence="1">
        <text>UTP + H2O = UMP + diphosphate + H(+)</text>
        <dbReference type="Rhea" id="RHEA:29395"/>
        <dbReference type="ChEBI" id="CHEBI:15377"/>
        <dbReference type="ChEBI" id="CHEBI:15378"/>
        <dbReference type="ChEBI" id="CHEBI:33019"/>
        <dbReference type="ChEBI" id="CHEBI:46398"/>
        <dbReference type="ChEBI" id="CHEBI:57865"/>
        <dbReference type="EC" id="3.6.1.9"/>
    </reaction>
</comment>
<comment type="cofactor">
    <cofactor evidence="1">
        <name>a divalent metal cation</name>
        <dbReference type="ChEBI" id="CHEBI:60240"/>
    </cofactor>
</comment>
<comment type="subcellular location">
    <subcellularLocation>
        <location evidence="1">Cytoplasm</location>
    </subcellularLocation>
</comment>
<comment type="similarity">
    <text evidence="1">Belongs to the Maf family. YhdE subfamily.</text>
</comment>
<reference key="1">
    <citation type="submission" date="2009-06" db="EMBL/GenBank/DDBJ databases">
        <title>Complete sequence of chromosome of Geopacillus sp. WCH70.</title>
        <authorList>
            <consortium name="US DOE Joint Genome Institute"/>
            <person name="Lucas S."/>
            <person name="Copeland A."/>
            <person name="Lapidus A."/>
            <person name="Glavina del Rio T."/>
            <person name="Dalin E."/>
            <person name="Tice H."/>
            <person name="Bruce D."/>
            <person name="Goodwin L."/>
            <person name="Pitluck S."/>
            <person name="Chertkov O."/>
            <person name="Brettin T."/>
            <person name="Detter J.C."/>
            <person name="Han C."/>
            <person name="Larimer F."/>
            <person name="Land M."/>
            <person name="Hauser L."/>
            <person name="Kyrpides N."/>
            <person name="Mikhailova N."/>
            <person name="Brumm P."/>
            <person name="Mead D.A."/>
            <person name="Richardson P."/>
        </authorList>
    </citation>
    <scope>NUCLEOTIDE SEQUENCE [LARGE SCALE GENOMIC DNA]</scope>
    <source>
        <strain>WCH70</strain>
    </source>
</reference>
<feature type="chain" id="PRO_1000211771" description="dTTP/UTP pyrophosphatase">
    <location>
        <begin position="1"/>
        <end position="186"/>
    </location>
</feature>
<feature type="active site" description="Proton acceptor" evidence="1">
    <location>
        <position position="69"/>
    </location>
</feature>
<feature type="site" description="Important for substrate specificity" evidence="1">
    <location>
        <position position="12"/>
    </location>
</feature>
<feature type="site" description="Important for substrate specificity" evidence="1">
    <location>
        <position position="70"/>
    </location>
</feature>
<feature type="site" description="Important for substrate specificity" evidence="1">
    <location>
        <position position="152"/>
    </location>
</feature>